<evidence type="ECO:0000255" key="1">
    <source>
        <dbReference type="HAMAP-Rule" id="MF_00522"/>
    </source>
</evidence>
<name>PSAJ_ATRBE</name>
<proteinExistence type="inferred from homology"/>
<comment type="function">
    <text evidence="1">May help in the organization of the PsaE and PsaF subunits.</text>
</comment>
<comment type="subcellular location">
    <subcellularLocation>
        <location evidence="1">Plastid</location>
        <location evidence="1">Chloroplast thylakoid membrane</location>
        <topology evidence="1">Single-pass membrane protein</topology>
    </subcellularLocation>
</comment>
<comment type="similarity">
    <text evidence="1">Belongs to the PsaJ family.</text>
</comment>
<gene>
    <name evidence="1" type="primary">psaJ</name>
</gene>
<geneLocation type="chloroplast"/>
<accession>Q8S8W3</accession>
<feature type="chain" id="PRO_0000276049" description="Photosystem I reaction center subunit IX">
    <location>
        <begin position="1"/>
        <end position="42"/>
    </location>
</feature>
<feature type="transmembrane region" description="Helical" evidence="1">
    <location>
        <begin position="7"/>
        <end position="27"/>
    </location>
</feature>
<protein>
    <recommendedName>
        <fullName evidence="1">Photosystem I reaction center subunit IX</fullName>
    </recommendedName>
    <alternativeName>
        <fullName evidence="1">PSI-J</fullName>
    </alternativeName>
</protein>
<reference key="1">
    <citation type="journal article" date="2002" name="Mol. Biol. Evol.">
        <title>The plastid chromosome of Atropa belladonna and its comparison with that of Nicotiana tabacum: the role of RNA editing in generating divergence in the process of plant speciation.</title>
        <authorList>
            <person name="Schmitz-Linneweber C."/>
            <person name="Regel R."/>
            <person name="Du T.G."/>
            <person name="Hupfer H."/>
            <person name="Herrmann R.G."/>
            <person name="Maier R.M."/>
        </authorList>
    </citation>
    <scope>NUCLEOTIDE SEQUENCE [LARGE SCALE GENOMIC DNA]</scope>
    <source>
        <strain>cv. Ab5p(kan)</strain>
    </source>
</reference>
<sequence>MRDLKTYLSVAPVLSTLWFVALAGLLIEINRFFPDALTFPFF</sequence>
<keyword id="KW-0150">Chloroplast</keyword>
<keyword id="KW-0472">Membrane</keyword>
<keyword id="KW-0602">Photosynthesis</keyword>
<keyword id="KW-0603">Photosystem I</keyword>
<keyword id="KW-0934">Plastid</keyword>
<keyword id="KW-0793">Thylakoid</keyword>
<keyword id="KW-0812">Transmembrane</keyword>
<keyword id="KW-1133">Transmembrane helix</keyword>
<dbReference type="EMBL" id="AJ316582">
    <property type="protein sequence ID" value="CAC88064.1"/>
    <property type="molecule type" value="Genomic_DNA"/>
</dbReference>
<dbReference type="RefSeq" id="NP_783252.1">
    <property type="nucleotide sequence ID" value="NC_004561.1"/>
</dbReference>
<dbReference type="SMR" id="Q8S8W3"/>
<dbReference type="GeneID" id="806570"/>
<dbReference type="GO" id="GO:0009535">
    <property type="term" value="C:chloroplast thylakoid membrane"/>
    <property type="evidence" value="ECO:0007669"/>
    <property type="project" value="UniProtKB-SubCell"/>
</dbReference>
<dbReference type="GO" id="GO:0009522">
    <property type="term" value="C:photosystem I"/>
    <property type="evidence" value="ECO:0007669"/>
    <property type="project" value="UniProtKB-KW"/>
</dbReference>
<dbReference type="GO" id="GO:0015979">
    <property type="term" value="P:photosynthesis"/>
    <property type="evidence" value="ECO:0007669"/>
    <property type="project" value="UniProtKB-UniRule"/>
</dbReference>
<dbReference type="FunFam" id="1.20.5.510:FF:000001">
    <property type="entry name" value="Photosystem I reaction center subunit IX"/>
    <property type="match status" value="1"/>
</dbReference>
<dbReference type="Gene3D" id="1.20.5.510">
    <property type="entry name" value="Single helix bin"/>
    <property type="match status" value="1"/>
</dbReference>
<dbReference type="HAMAP" id="MF_00522">
    <property type="entry name" value="PSI_PsaJ"/>
    <property type="match status" value="1"/>
</dbReference>
<dbReference type="InterPro" id="IPR002615">
    <property type="entry name" value="PSI_PsaJ"/>
</dbReference>
<dbReference type="InterPro" id="IPR036062">
    <property type="entry name" value="PSI_PsaJ_sf"/>
</dbReference>
<dbReference type="PANTHER" id="PTHR36082">
    <property type="match status" value="1"/>
</dbReference>
<dbReference type="PANTHER" id="PTHR36082:SF2">
    <property type="entry name" value="PHOTOSYSTEM I REACTION CENTER SUBUNIT IX"/>
    <property type="match status" value="1"/>
</dbReference>
<dbReference type="Pfam" id="PF01701">
    <property type="entry name" value="PSI_PsaJ"/>
    <property type="match status" value="1"/>
</dbReference>
<dbReference type="SUPFAM" id="SSF81544">
    <property type="entry name" value="Subunit IX of photosystem I reaction centre, PsaJ"/>
    <property type="match status" value="1"/>
</dbReference>
<organism>
    <name type="scientific">Atropa belladonna</name>
    <name type="common">Belladonna</name>
    <name type="synonym">Deadly nightshade</name>
    <dbReference type="NCBI Taxonomy" id="33113"/>
    <lineage>
        <taxon>Eukaryota</taxon>
        <taxon>Viridiplantae</taxon>
        <taxon>Streptophyta</taxon>
        <taxon>Embryophyta</taxon>
        <taxon>Tracheophyta</taxon>
        <taxon>Spermatophyta</taxon>
        <taxon>Magnoliopsida</taxon>
        <taxon>eudicotyledons</taxon>
        <taxon>Gunneridae</taxon>
        <taxon>Pentapetalae</taxon>
        <taxon>asterids</taxon>
        <taxon>lamiids</taxon>
        <taxon>Solanales</taxon>
        <taxon>Solanaceae</taxon>
        <taxon>Solanoideae</taxon>
        <taxon>Hyoscyameae</taxon>
        <taxon>Atropa</taxon>
    </lineage>
</organism>